<reference key="1">
    <citation type="journal article" date="1995" name="Virology">
        <title>Analysis of the complete nucleotide sequence of African swine fever virus.</title>
        <authorList>
            <person name="Yanez R.J."/>
            <person name="Rodriguez J.M."/>
            <person name="Nogal M.L."/>
            <person name="Yuste L."/>
            <person name="Enriquez C."/>
            <person name="Rodriguez J.F."/>
            <person name="Vinuela E."/>
        </authorList>
    </citation>
    <scope>NUCLEOTIDE SEQUENCE [LARGE SCALE GENOMIC DNA]</scope>
</reference>
<reference key="2">
    <citation type="journal article" date="2018" name="J. Virol.">
        <title>A Proteomic Atlas of the African Swine Fever Virus Particle.</title>
        <authorList>
            <person name="Alejo A."/>
            <person name="Matamoros T."/>
            <person name="Guerra M."/>
            <person name="Andres G."/>
        </authorList>
    </citation>
    <scope>SUBCELLULAR LOCATION</scope>
</reference>
<reference key="3">
    <citation type="journal article" date="2020" name="J. Virol.">
        <title>The African Swine Fever Virus Transcriptome.</title>
        <authorList>
            <person name="Cackett G."/>
            <person name="Matelska D."/>
            <person name="Sykora M."/>
            <person name="Portugal R."/>
            <person name="Malecki M."/>
            <person name="Baehler J."/>
            <person name="Dixon L."/>
            <person name="Werner F."/>
        </authorList>
    </citation>
    <scope>INDUCTION</scope>
</reference>
<name>VF184_ASFB7</name>
<feature type="chain" id="PRO_0000373572" description="Uncharacterized protein E184L">
    <location>
        <begin position="1"/>
        <end position="184"/>
    </location>
</feature>
<keyword id="KW-0426">Late protein</keyword>
<keyword id="KW-1185">Reference proteome</keyword>
<keyword id="KW-0946">Virion</keyword>
<proteinExistence type="evidence at transcript level"/>
<gene>
    <name type="ordered locus">Ba71V-125</name>
    <name type="ORF">E184L</name>
</gene>
<comment type="subcellular location">
    <subcellularLocation>
        <location evidence="1">Virion</location>
    </subcellularLocation>
</comment>
<comment type="induction">
    <text evidence="2">Expressed in the late phase of the viral replicative cycle.</text>
</comment>
<comment type="similarity">
    <text evidence="3">Belongs to the asfivirus E184L family.</text>
</comment>
<sequence length="184" mass="21782">MKTFITCTSVKNYFRQHLKTNQRISSELISYVCTILNHICHQYLQNPQAQEEEWFALIKELPIIKDGLSKEERFFSSGVKHFLHEYKITPENQEKFQKMLNAITEQLMSRLCKVFSIMIQRQGFLKTQTLMYSHLFTILSILMVADNLYGEQDPTEFFSLIIEQTKTIKKKKKSSSEEEESHEE</sequence>
<protein>
    <recommendedName>
        <fullName>Uncharacterized protein E184L</fullName>
        <shortName>pE184L</shortName>
    </recommendedName>
</protein>
<dbReference type="EMBL" id="U18466">
    <property type="protein sequence ID" value="AAA65353.1"/>
    <property type="molecule type" value="Genomic_DNA"/>
</dbReference>
<dbReference type="RefSeq" id="NP_042817.1">
    <property type="nucleotide sequence ID" value="NC_001659.2"/>
</dbReference>
<dbReference type="GeneID" id="22220354"/>
<dbReference type="KEGG" id="vg:22220354"/>
<dbReference type="Proteomes" id="UP000000624">
    <property type="component" value="Segment"/>
</dbReference>
<dbReference type="GO" id="GO:0044423">
    <property type="term" value="C:virion component"/>
    <property type="evidence" value="ECO:0007669"/>
    <property type="project" value="UniProtKB-KW"/>
</dbReference>
<organism>
    <name type="scientific">African swine fever virus (strain Badajoz 1971 Vero-adapted)</name>
    <name type="common">Ba71V</name>
    <name type="synonym">ASFV</name>
    <dbReference type="NCBI Taxonomy" id="10498"/>
    <lineage>
        <taxon>Viruses</taxon>
        <taxon>Varidnaviria</taxon>
        <taxon>Bamfordvirae</taxon>
        <taxon>Nucleocytoviricota</taxon>
        <taxon>Pokkesviricetes</taxon>
        <taxon>Asfuvirales</taxon>
        <taxon>Asfarviridae</taxon>
        <taxon>Asfivirus</taxon>
        <taxon>African swine fever virus</taxon>
    </lineage>
</organism>
<evidence type="ECO:0000269" key="1">
    <source>
    </source>
</evidence>
<evidence type="ECO:0000269" key="2">
    <source>
    </source>
</evidence>
<evidence type="ECO:0000305" key="3"/>
<organismHost>
    <name type="scientific">Ornithodoros</name>
    <name type="common">relapsing fever ticks</name>
    <dbReference type="NCBI Taxonomy" id="6937"/>
</organismHost>
<organismHost>
    <name type="scientific">Sus scrofa</name>
    <name type="common">Pig</name>
    <dbReference type="NCBI Taxonomy" id="9823"/>
</organismHost>
<accession>Q65193</accession>